<comment type="function">
    <text evidence="1">Catalyzes the catabolism of the allantoin degradation intermediate (S)-ureidoglycolate, generating urea and glyoxylate. Involved in the anaerobic utilization of allantoin as sole nitrogen source. Reinforces the induction of genes involved in the degradation of allantoin and glyoxylate by producing glyoxylate.</text>
</comment>
<comment type="catalytic activity">
    <reaction evidence="1">
        <text>(S)-ureidoglycolate = urea + glyoxylate</text>
        <dbReference type="Rhea" id="RHEA:11304"/>
        <dbReference type="ChEBI" id="CHEBI:16199"/>
        <dbReference type="ChEBI" id="CHEBI:36655"/>
        <dbReference type="ChEBI" id="CHEBI:57296"/>
        <dbReference type="EC" id="4.3.2.3"/>
    </reaction>
</comment>
<comment type="cofactor">
    <cofactor evidence="1">
        <name>Ni(2+)</name>
        <dbReference type="ChEBI" id="CHEBI:49786"/>
    </cofactor>
</comment>
<comment type="pathway">
    <text evidence="1">Nitrogen metabolism; (S)-allantoin degradation.</text>
</comment>
<comment type="subunit">
    <text evidence="1">Homodimer.</text>
</comment>
<comment type="similarity">
    <text evidence="1">Belongs to the ureidoglycolate lyase family.</text>
</comment>
<name>ALLA_ECOHS</name>
<protein>
    <recommendedName>
        <fullName evidence="1">Ureidoglycolate lyase</fullName>
        <ecNumber evidence="1">4.3.2.3</ecNumber>
    </recommendedName>
    <alternativeName>
        <fullName evidence="1">Ureidoglycolatase</fullName>
    </alternativeName>
</protein>
<dbReference type="EC" id="4.3.2.3" evidence="1"/>
<dbReference type="EMBL" id="CP000802">
    <property type="protein sequence ID" value="ABV04963.1"/>
    <property type="molecule type" value="Genomic_DNA"/>
</dbReference>
<dbReference type="RefSeq" id="WP_000776388.1">
    <property type="nucleotide sequence ID" value="NC_009800.1"/>
</dbReference>
<dbReference type="SMR" id="A7ZXF9"/>
<dbReference type="GeneID" id="75202348"/>
<dbReference type="KEGG" id="ecx:EcHS_A0579"/>
<dbReference type="HOGENOM" id="CLU_070848_1_1_6"/>
<dbReference type="UniPathway" id="UPA00395"/>
<dbReference type="GO" id="GO:0004848">
    <property type="term" value="F:ureidoglycolate hydrolase activity"/>
    <property type="evidence" value="ECO:0007669"/>
    <property type="project" value="InterPro"/>
</dbReference>
<dbReference type="GO" id="GO:0050385">
    <property type="term" value="F:ureidoglycolate lyase activity"/>
    <property type="evidence" value="ECO:0007669"/>
    <property type="project" value="UniProtKB-UniRule"/>
</dbReference>
<dbReference type="GO" id="GO:0000256">
    <property type="term" value="P:allantoin catabolic process"/>
    <property type="evidence" value="ECO:0007669"/>
    <property type="project" value="UniProtKB-UniRule"/>
</dbReference>
<dbReference type="GO" id="GO:0006145">
    <property type="term" value="P:purine nucleobase catabolic process"/>
    <property type="evidence" value="ECO:0007669"/>
    <property type="project" value="UniProtKB-UniRule"/>
</dbReference>
<dbReference type="CDD" id="cd20298">
    <property type="entry name" value="cupin_UAH"/>
    <property type="match status" value="1"/>
</dbReference>
<dbReference type="FunFam" id="2.60.120.480:FF:000001">
    <property type="entry name" value="Ureidoglycolate lyase"/>
    <property type="match status" value="1"/>
</dbReference>
<dbReference type="Gene3D" id="2.60.120.480">
    <property type="entry name" value="Ureidoglycolate hydrolase"/>
    <property type="match status" value="1"/>
</dbReference>
<dbReference type="HAMAP" id="MF_00616">
    <property type="entry name" value="Ureidogly_lyase"/>
    <property type="match status" value="1"/>
</dbReference>
<dbReference type="InterPro" id="IPR011051">
    <property type="entry name" value="RmlC_Cupin_sf"/>
</dbReference>
<dbReference type="InterPro" id="IPR047233">
    <property type="entry name" value="UAH_cupin"/>
</dbReference>
<dbReference type="InterPro" id="IPR007247">
    <property type="entry name" value="Ureidogly_lyase"/>
</dbReference>
<dbReference type="InterPro" id="IPR023525">
    <property type="entry name" value="Ureidogly_lyase_bac"/>
</dbReference>
<dbReference type="InterPro" id="IPR024060">
    <property type="entry name" value="Ureidoglycolate_lyase_dom_sf"/>
</dbReference>
<dbReference type="NCBIfam" id="NF002948">
    <property type="entry name" value="PRK03606.1-1"/>
    <property type="match status" value="1"/>
</dbReference>
<dbReference type="NCBIfam" id="NF009932">
    <property type="entry name" value="PRK13395.1"/>
    <property type="match status" value="1"/>
</dbReference>
<dbReference type="PANTHER" id="PTHR21221">
    <property type="entry name" value="UREIDOGLYCOLATE HYDROLASE"/>
    <property type="match status" value="1"/>
</dbReference>
<dbReference type="PANTHER" id="PTHR21221:SF1">
    <property type="entry name" value="UREIDOGLYCOLATE LYASE"/>
    <property type="match status" value="1"/>
</dbReference>
<dbReference type="Pfam" id="PF04115">
    <property type="entry name" value="Ureidogly_lyase"/>
    <property type="match status" value="1"/>
</dbReference>
<dbReference type="PIRSF" id="PIRSF017306">
    <property type="entry name" value="Ureidogly_hydro"/>
    <property type="match status" value="1"/>
</dbReference>
<dbReference type="SUPFAM" id="SSF51182">
    <property type="entry name" value="RmlC-like cupins"/>
    <property type="match status" value="1"/>
</dbReference>
<proteinExistence type="inferred from homology"/>
<keyword id="KW-0456">Lyase</keyword>
<keyword id="KW-0659">Purine metabolism</keyword>
<accession>A7ZXF9</accession>
<feature type="chain" id="PRO_1000061352" description="Ureidoglycolate lyase">
    <location>
        <begin position="1"/>
        <end position="160"/>
    </location>
</feature>
<evidence type="ECO:0000255" key="1">
    <source>
        <dbReference type="HAMAP-Rule" id="MF_00616"/>
    </source>
</evidence>
<organism>
    <name type="scientific">Escherichia coli O9:H4 (strain HS)</name>
    <dbReference type="NCBI Taxonomy" id="331112"/>
    <lineage>
        <taxon>Bacteria</taxon>
        <taxon>Pseudomonadati</taxon>
        <taxon>Pseudomonadota</taxon>
        <taxon>Gammaproteobacteria</taxon>
        <taxon>Enterobacterales</taxon>
        <taxon>Enterobacteriaceae</taxon>
        <taxon>Escherichia</taxon>
    </lineage>
</organism>
<reference key="1">
    <citation type="journal article" date="2008" name="J. Bacteriol.">
        <title>The pangenome structure of Escherichia coli: comparative genomic analysis of E. coli commensal and pathogenic isolates.</title>
        <authorList>
            <person name="Rasko D.A."/>
            <person name="Rosovitz M.J."/>
            <person name="Myers G.S.A."/>
            <person name="Mongodin E.F."/>
            <person name="Fricke W.F."/>
            <person name="Gajer P."/>
            <person name="Crabtree J."/>
            <person name="Sebaihia M."/>
            <person name="Thomson N.R."/>
            <person name="Chaudhuri R."/>
            <person name="Henderson I.R."/>
            <person name="Sperandio V."/>
            <person name="Ravel J."/>
        </authorList>
    </citation>
    <scope>NUCLEOTIDE SEQUENCE [LARGE SCALE GENOMIC DNA]</scope>
    <source>
        <strain>HS</strain>
    </source>
</reference>
<sequence>MKLQVLPLSQEAFSAYGDVIETQQRDFFHINNGLVERYHDLALVEILEQDRTLISINRAQPANLPLTIHELERHPLGTQAFIPMKGEVFVVVVALGDDKPDLSTLRAFITNGEQGVNYHRNVWHHPLFAWQRVTDFLTIDRGGSDNCDVESIPEQELCFA</sequence>
<gene>
    <name evidence="1" type="primary">allA</name>
    <name type="ordered locus">EcHS_A0579</name>
</gene>